<protein>
    <recommendedName>
        <fullName evidence="4">Secreted RxLR effector protein 93</fullName>
    </recommendedName>
</protein>
<accession>P0CV37</accession>
<name>RLR93_PLAVT</name>
<organism>
    <name type="scientific">Plasmopara viticola</name>
    <name type="common">Downy mildew of grapevine</name>
    <name type="synonym">Botrytis viticola</name>
    <dbReference type="NCBI Taxonomy" id="143451"/>
    <lineage>
        <taxon>Eukaryota</taxon>
        <taxon>Sar</taxon>
        <taxon>Stramenopiles</taxon>
        <taxon>Oomycota</taxon>
        <taxon>Peronosporales</taxon>
        <taxon>Peronosporaceae</taxon>
        <taxon>Plasmopara</taxon>
    </lineage>
</organism>
<sequence>MRFYLTKLFAAAGALAWTTGLSTANAVTTPVSPLSRSSDHHQSDDSTQRRLRTLNGADEERMSPLTMTRLRAALAFELELVDFDSLAQNQFLARVREMLGIKVTGSTTAGLPKMIRRFGVKNSAKNVAKRVQDPAKQADLIAGLLIYPVKQRDLLGDELLRKWPYLTVSAIKKRVIAEKNRKVHKKPRPFAAHVHAPTIAAY</sequence>
<evidence type="ECO:0000255" key="1"/>
<evidence type="ECO:0000256" key="2">
    <source>
        <dbReference type="SAM" id="MobiDB-lite"/>
    </source>
</evidence>
<evidence type="ECO:0000269" key="3">
    <source>
    </source>
</evidence>
<evidence type="ECO:0000303" key="4">
    <source>
    </source>
</evidence>
<evidence type="ECO:0000305" key="5"/>
<evidence type="ECO:0000305" key="6">
    <source>
    </source>
</evidence>
<reference key="1">
    <citation type="journal article" date="2018" name="Front. Plant Sci.">
        <title>In planta functional analysis and subcellular localization of the oomycete pathogen Plasmopara viticola candidate RXLR effector repertoire.</title>
        <authorList>
            <person name="Liu Y."/>
            <person name="Lan X."/>
            <person name="Song S."/>
            <person name="Yin L."/>
            <person name="Dry I.B."/>
            <person name="Qu J."/>
            <person name="Xiang J."/>
            <person name="Lu J."/>
        </authorList>
    </citation>
    <scope>NUCLEOTIDE SEQUENCE [MRNA]</scope>
    <scope>DOMAIN</scope>
    <scope>FUNCTION</scope>
    <scope>SUBCELLULAR LOCATION</scope>
</reference>
<gene>
    <name evidence="4" type="primary">RXLR93</name>
</gene>
<keyword id="KW-1048">Host nucleus</keyword>
<keyword id="KW-0964">Secreted</keyword>
<keyword id="KW-0732">Signal</keyword>
<keyword id="KW-0843">Virulence</keyword>
<feature type="signal peptide" evidence="1">
    <location>
        <begin position="1"/>
        <end position="16"/>
    </location>
</feature>
<feature type="chain" id="PRO_0000447944" description="Secreted RxLR effector protein 93">
    <location>
        <begin position="17"/>
        <end position="202"/>
    </location>
</feature>
<feature type="region of interest" description="Disordered" evidence="2">
    <location>
        <begin position="29"/>
        <end position="58"/>
    </location>
</feature>
<feature type="short sequence motif" description="RxLR-dEER" evidence="6">
    <location>
        <begin position="49"/>
        <end position="61"/>
    </location>
</feature>
<feature type="compositionally biased region" description="Basic and acidic residues" evidence="2">
    <location>
        <begin position="37"/>
        <end position="48"/>
    </location>
</feature>
<comment type="function">
    <text evidence="3">Secreted effector that completely suppresses the host cell death induced by cell death-inducing proteins.</text>
</comment>
<comment type="subcellular location">
    <subcellularLocation>
        <location evidence="3">Secreted</location>
    </subcellularLocation>
    <subcellularLocation>
        <location evidence="3">Host nucleus</location>
    </subcellularLocation>
</comment>
<comment type="domain">
    <text evidence="6">The RxLR-dEER motif acts to carry the protein into the host cell cytoplasm through binding to cell surface phosphatidylinositol-3-phosphate.</text>
</comment>
<comment type="similarity">
    <text evidence="5">Belongs to the RxLR effector family.</text>
</comment>
<dbReference type="GO" id="GO:0005576">
    <property type="term" value="C:extracellular region"/>
    <property type="evidence" value="ECO:0007669"/>
    <property type="project" value="UniProtKB-SubCell"/>
</dbReference>
<dbReference type="GO" id="GO:0042025">
    <property type="term" value="C:host cell nucleus"/>
    <property type="evidence" value="ECO:0007669"/>
    <property type="project" value="UniProtKB-SubCell"/>
</dbReference>
<proteinExistence type="evidence at transcript level"/>